<protein>
    <recommendedName>
        <fullName>Tudor domain-containing protein 7</fullName>
    </recommendedName>
</protein>
<evidence type="ECO:0000250" key="1"/>
<evidence type="ECO:0000250" key="2">
    <source>
        <dbReference type="UniProtKB" id="Q8K1H1"/>
    </source>
</evidence>
<evidence type="ECO:0000250" key="3">
    <source>
        <dbReference type="UniProtKB" id="Q8NHU6"/>
    </source>
</evidence>
<evidence type="ECO:0000255" key="4">
    <source>
        <dbReference type="PROSITE-ProRule" id="PRU00211"/>
    </source>
</evidence>
<evidence type="ECO:0000255" key="5">
    <source>
        <dbReference type="PROSITE-ProRule" id="PRU00975"/>
    </source>
</evidence>
<evidence type="ECO:0000305" key="6"/>
<accession>Q5RAH6</accession>
<sequence>MLEGDLASKMLRAVLQSHKNGVALPRLQGEYRSLTGDWIPFKQLGFPTLEAYLRSVPAVVRIETSRSGEITCYAMACTETARIAQLVARQRSSKRKTGRQVNCQMRVKKTMPFFLEGKPKATLRQPGFASNFSVGKKPNLAPLRDKGNSAVVKPDAEISPCMLHTTLGNEAFKDIPVQRHVTMSTNNRFSPKASLQPPLQMHLSRTSTKEMSDNLNQTVEKPNVTPPASYTYKMDEVQNRIKEILNKHNNGIWISKLPHFYKELYKEDLNQGILQQFEHWPHICTVEKPCSGGQDLLLYPAKRKQLLRSELDTEKVPLSPLPGPKQTPPLKGCPTVMAGDFKEKVADLLVKYTSGLWASALPKAFEEMYKVKFPEDALKNLASLSDVCSIDYISGNPQKAILYAKLPLPTDKIQKDAEQAHGDHDIKAMVEQEYLQLEENIAESANTFMEYITVPPLMIPTEASPSVLVVELSNTNEVVIRYVGKDYSAAQELMEDEMKEYYSKNPKVTPVQAVNVGQLLAVNAEEDAWLRAQVISTEENKIKVCYVDYGFSENVEKSKAYKLNPKFCSLSFQATKCKLAGLEVLSDDPDLVKVVESLTCGKIFAVEILDKADIPLVVLYDTSGEDDININATCLKAICDKSLEVHLQVDAMYTNVKVTNICSDGTLYCQVPCKGLNKLSDLLRKIEDYFHCKHMTSECFVSLPFCGKICLFHCKGKWLRVEITNVHSSRALDVQFLDSGTVTSVKVSELREIPPRFLQEMIAIPPQAIKCCLADLPQSIGMWTPDAVLWLRDSVLNCSDCSIKVTKVDETRGIAHVYLFTPKNFPDPHRSINRQITNADLWKHQKDVFLSAISSGAGSPNSKNGNMRVSGDTGENFRKNLTDVIKKSMMDHTSSFSTEELPPPVHLSKPGEHMDVYVPVACHPGYFVIQPWQEIHKLEVLMEEMILYYSVSEERHIAVEKDQVYAAKVENKWHRVLLKGILTNGLVSVYELDYGKHELVNIRKVQPLADMFRKLPFQAVTAQLAGVKCTQWSEEASMVFRNRVEKKPLVALVQTVIENANPWDRKVVVYLVDTSLPDTDIWIHDFMSEYLIELSKVN</sequence>
<keyword id="KW-0963">Cytoplasm</keyword>
<keyword id="KW-0221">Differentiation</keyword>
<keyword id="KW-0597">Phosphoprotein</keyword>
<keyword id="KW-1185">Reference proteome</keyword>
<keyword id="KW-0677">Repeat</keyword>
<keyword id="KW-0694">RNA-binding</keyword>
<keyword id="KW-0744">Spermatogenesis</keyword>
<name>TDRD7_PONAB</name>
<gene>
    <name type="primary">TDRD7</name>
</gene>
<proteinExistence type="evidence at transcript level"/>
<comment type="function">
    <text evidence="1">Component of specific cytoplasmic RNA granules involved in post-transcriptional regulation of specific genes: probably acts by binding to specific mRNAs and regulating their translation. Required for lens transparency during lens development, by regulating translation of genes such as CRYBB3 and HSPB1 in the developing lens. Also required during spermatogenesis (By similarity).</text>
</comment>
<comment type="subunit">
    <text evidence="1">Found in a mRNP complex, at least composed of TDRD1, TDRD6, TDRD7 and DDX4. Found in a complex containing CABLES1, CDK16 and CDK17. Interacts with CABLES1, CDK17 and PIWIL1 (By similarity).</text>
</comment>
<comment type="subcellular location">
    <subcellularLocation>
        <location evidence="1">Cytoplasm</location>
    </subcellularLocation>
    <text evidence="1">Localizes to cytoplasmic RNA granules (By similarity). Present in chromatoid body (CB) of spermatids (mammalian counterpart of germplasm, pole plasm or polar granules in Drosophila germ cells), also named processing bodies (P-bodies) in somatic cells. Detected in the multilobular cytoplasmic CBs (also called intermitochondrial cementin) in pachytene spermatocytes and as a single perinuclear CB in haploid round spermatids (By similarity).</text>
</comment>
<comment type="similarity">
    <text evidence="6">Belongs to the TDRD7 family.</text>
</comment>
<dbReference type="EMBL" id="CR859039">
    <property type="protein sequence ID" value="CAH91234.1"/>
    <property type="molecule type" value="mRNA"/>
</dbReference>
<dbReference type="RefSeq" id="NP_001127391.1">
    <property type="nucleotide sequence ID" value="NM_001133919.2"/>
</dbReference>
<dbReference type="SMR" id="Q5RAH6"/>
<dbReference type="FunCoup" id="Q5RAH6">
    <property type="interactions" value="485"/>
</dbReference>
<dbReference type="STRING" id="9601.ENSPPYP00000021765"/>
<dbReference type="GeneID" id="100174458"/>
<dbReference type="KEGG" id="pon:100174458"/>
<dbReference type="CTD" id="23424"/>
<dbReference type="eggNOG" id="KOG2039">
    <property type="taxonomic scope" value="Eukaryota"/>
</dbReference>
<dbReference type="InParanoid" id="Q5RAH6"/>
<dbReference type="OrthoDB" id="10034606at2759"/>
<dbReference type="Proteomes" id="UP000001595">
    <property type="component" value="Unplaced"/>
</dbReference>
<dbReference type="GO" id="GO:0043186">
    <property type="term" value="C:P granule"/>
    <property type="evidence" value="ECO:0007669"/>
    <property type="project" value="TreeGrafter"/>
</dbReference>
<dbReference type="GO" id="GO:0035770">
    <property type="term" value="C:ribonucleoprotein granule"/>
    <property type="evidence" value="ECO:0000250"/>
    <property type="project" value="UniProtKB"/>
</dbReference>
<dbReference type="GO" id="GO:0003729">
    <property type="term" value="F:mRNA binding"/>
    <property type="evidence" value="ECO:0000250"/>
    <property type="project" value="UniProtKB"/>
</dbReference>
<dbReference type="GO" id="GO:0070306">
    <property type="term" value="P:lens fiber cell differentiation"/>
    <property type="evidence" value="ECO:0000250"/>
    <property type="project" value="UniProtKB"/>
</dbReference>
<dbReference type="GO" id="GO:0002089">
    <property type="term" value="P:lens morphogenesis in camera-type eye"/>
    <property type="evidence" value="ECO:0000250"/>
    <property type="project" value="UniProtKB"/>
</dbReference>
<dbReference type="GO" id="GO:0030719">
    <property type="term" value="P:P granule organization"/>
    <property type="evidence" value="ECO:0007669"/>
    <property type="project" value="TreeGrafter"/>
</dbReference>
<dbReference type="GO" id="GO:0034587">
    <property type="term" value="P:piRNA processing"/>
    <property type="evidence" value="ECO:0007669"/>
    <property type="project" value="TreeGrafter"/>
</dbReference>
<dbReference type="GO" id="GO:0010608">
    <property type="term" value="P:post-transcriptional regulation of gene expression"/>
    <property type="evidence" value="ECO:0000250"/>
    <property type="project" value="UniProtKB"/>
</dbReference>
<dbReference type="GO" id="GO:0007283">
    <property type="term" value="P:spermatogenesis"/>
    <property type="evidence" value="ECO:0000250"/>
    <property type="project" value="UniProtKB"/>
</dbReference>
<dbReference type="CDD" id="cd09986">
    <property type="entry name" value="LOTUS_1_TDRD7"/>
    <property type="match status" value="1"/>
</dbReference>
<dbReference type="CDD" id="cd09973">
    <property type="entry name" value="LOTUS_2_TDRD7"/>
    <property type="match status" value="1"/>
</dbReference>
<dbReference type="CDD" id="cd09974">
    <property type="entry name" value="LOTUS_3_TDRD7"/>
    <property type="match status" value="1"/>
</dbReference>
<dbReference type="CDD" id="cd20427">
    <property type="entry name" value="Tudor_TDRD7_rpt1"/>
    <property type="match status" value="1"/>
</dbReference>
<dbReference type="CDD" id="cd20428">
    <property type="entry name" value="Tudor_TDRD7_rpt2"/>
    <property type="match status" value="1"/>
</dbReference>
<dbReference type="CDD" id="cd20429">
    <property type="entry name" value="Tudor_TDRD7_rpt3"/>
    <property type="match status" value="1"/>
</dbReference>
<dbReference type="FunFam" id="2.40.50.90:FF:000006">
    <property type="entry name" value="Tudor domain-containing protein 7"/>
    <property type="match status" value="1"/>
</dbReference>
<dbReference type="FunFam" id="3.30.420.610:FF:000008">
    <property type="entry name" value="Tudor domain-containing protein 7"/>
    <property type="match status" value="1"/>
</dbReference>
<dbReference type="FunFam" id="2.30.30.140:FF:000065">
    <property type="entry name" value="tudor domain-containing protein 7"/>
    <property type="match status" value="1"/>
</dbReference>
<dbReference type="FunFam" id="2.30.30.140:FF:000045">
    <property type="entry name" value="tudor domain-containing protein 7 isoform X1"/>
    <property type="match status" value="1"/>
</dbReference>
<dbReference type="FunFam" id="3.30.420.610:FF:000009">
    <property type="entry name" value="Tudor domain-containing protein 7 isoform X2"/>
    <property type="match status" value="1"/>
</dbReference>
<dbReference type="FunFam" id="2.30.30.140:FF:000053">
    <property type="entry name" value="tudor domain-containing protein 7 isoform X2"/>
    <property type="match status" value="1"/>
</dbReference>
<dbReference type="FunFam" id="3.30.420.610:FF:000006">
    <property type="entry name" value="tudor domain-containing protein 7 isoform X2"/>
    <property type="match status" value="1"/>
</dbReference>
<dbReference type="Gene3D" id="2.30.30.140">
    <property type="match status" value="3"/>
</dbReference>
<dbReference type="Gene3D" id="2.40.50.90">
    <property type="match status" value="3"/>
</dbReference>
<dbReference type="Gene3D" id="3.30.420.610">
    <property type="entry name" value="LOTUS domain-like"/>
    <property type="match status" value="3"/>
</dbReference>
<dbReference type="InterPro" id="IPR041966">
    <property type="entry name" value="LOTUS-like"/>
</dbReference>
<dbReference type="InterPro" id="IPR025605">
    <property type="entry name" value="OST-HTH/LOTUS_dom"/>
</dbReference>
<dbReference type="InterPro" id="IPR035437">
    <property type="entry name" value="SNase_OB-fold_sf"/>
</dbReference>
<dbReference type="InterPro" id="IPR037978">
    <property type="entry name" value="TDRD7_LOTUS_3"/>
</dbReference>
<dbReference type="InterPro" id="IPR002999">
    <property type="entry name" value="Tudor"/>
</dbReference>
<dbReference type="InterPro" id="IPR050621">
    <property type="entry name" value="Tudor_domain_containing"/>
</dbReference>
<dbReference type="InterPro" id="IPR047448">
    <property type="entry name" value="Tudor_TDRD7_rpt2"/>
</dbReference>
<dbReference type="InterPro" id="IPR047449">
    <property type="entry name" value="Tudor_TDRD7_rpt3"/>
</dbReference>
<dbReference type="PANTHER" id="PTHR22948">
    <property type="entry name" value="TUDOR DOMAIN CONTAINING PROTEIN"/>
    <property type="match status" value="1"/>
</dbReference>
<dbReference type="PANTHER" id="PTHR22948:SF14">
    <property type="entry name" value="TUDOR DOMAIN-CONTAINING PROTEIN 7"/>
    <property type="match status" value="1"/>
</dbReference>
<dbReference type="Pfam" id="PF12872">
    <property type="entry name" value="OST-HTH"/>
    <property type="match status" value="2"/>
</dbReference>
<dbReference type="Pfam" id="PF00567">
    <property type="entry name" value="TUDOR"/>
    <property type="match status" value="3"/>
</dbReference>
<dbReference type="SMART" id="SM00333">
    <property type="entry name" value="TUDOR"/>
    <property type="match status" value="3"/>
</dbReference>
<dbReference type="SUPFAM" id="SSF63748">
    <property type="entry name" value="Tudor/PWWP/MBT"/>
    <property type="match status" value="3"/>
</dbReference>
<dbReference type="PROSITE" id="PS51644">
    <property type="entry name" value="HTH_OST"/>
    <property type="match status" value="3"/>
</dbReference>
<dbReference type="PROSITE" id="PS50304">
    <property type="entry name" value="TUDOR"/>
    <property type="match status" value="2"/>
</dbReference>
<reference key="1">
    <citation type="submission" date="2004-11" db="EMBL/GenBank/DDBJ databases">
        <authorList>
            <consortium name="The German cDNA consortium"/>
        </authorList>
    </citation>
    <scope>NUCLEOTIDE SEQUENCE [LARGE SCALE MRNA]</scope>
    <source>
        <tissue>Brain cortex</tissue>
    </source>
</reference>
<feature type="chain" id="PRO_0000292551" description="Tudor domain-containing protein 7">
    <location>
        <begin position="1"/>
        <end position="1098"/>
    </location>
</feature>
<feature type="domain" description="HTH OST-type 1" evidence="5">
    <location>
        <begin position="3"/>
        <end position="76"/>
    </location>
</feature>
<feature type="domain" description="HTH OST-type 2" evidence="5">
    <location>
        <begin position="233"/>
        <end position="302"/>
    </location>
</feature>
<feature type="domain" description="HTH OST-type 3" evidence="5">
    <location>
        <begin position="337"/>
        <end position="406"/>
    </location>
</feature>
<feature type="domain" description="Tudor 1" evidence="4">
    <location>
        <begin position="513"/>
        <end position="570"/>
    </location>
</feature>
<feature type="domain" description="Tudor 2" evidence="4">
    <location>
        <begin position="703"/>
        <end position="760"/>
    </location>
</feature>
<feature type="region of interest" description="Interaction with CDK17" evidence="1">
    <location>
        <begin position="861"/>
        <end position="1098"/>
    </location>
</feature>
<feature type="region of interest" description="Interaction with CABLES1" evidence="1">
    <location>
        <begin position="893"/>
        <end position="1098"/>
    </location>
</feature>
<feature type="modified residue" description="Phosphoserine" evidence="3">
    <location>
        <position position="319"/>
    </location>
</feature>
<feature type="modified residue" description="Phosphoserine" evidence="2">
    <location>
        <position position="859"/>
    </location>
</feature>
<organism>
    <name type="scientific">Pongo abelii</name>
    <name type="common">Sumatran orangutan</name>
    <name type="synonym">Pongo pygmaeus abelii</name>
    <dbReference type="NCBI Taxonomy" id="9601"/>
    <lineage>
        <taxon>Eukaryota</taxon>
        <taxon>Metazoa</taxon>
        <taxon>Chordata</taxon>
        <taxon>Craniata</taxon>
        <taxon>Vertebrata</taxon>
        <taxon>Euteleostomi</taxon>
        <taxon>Mammalia</taxon>
        <taxon>Eutheria</taxon>
        <taxon>Euarchontoglires</taxon>
        <taxon>Primates</taxon>
        <taxon>Haplorrhini</taxon>
        <taxon>Catarrhini</taxon>
        <taxon>Hominidae</taxon>
        <taxon>Pongo</taxon>
    </lineage>
</organism>